<protein>
    <recommendedName>
        <fullName evidence="10">Serine protease ndl</fullName>
        <ecNumber evidence="4">3.4.21.-</ecNumber>
    </recommendedName>
    <alternativeName>
        <fullName evidence="13">Protein nudel</fullName>
    </alternativeName>
</protein>
<gene>
    <name evidence="13" type="primary">ndl</name>
    <name evidence="13" type="ORF">CG10129</name>
</gene>
<name>NUDEL_DROME</name>
<proteinExistence type="evidence at protein level"/>
<feature type="signal peptide" evidence="2">
    <location>
        <begin position="1"/>
        <end position="43"/>
    </location>
</feature>
<feature type="chain" id="PRO_0000028136" description="Serine protease ndl">
    <location>
        <begin position="44"/>
        <end position="2616"/>
    </location>
</feature>
<feature type="repeat" description="WIID 1">
    <location>
        <begin position="261"/>
        <end position="269"/>
    </location>
</feature>
<feature type="repeat" description="WIID 2">
    <location>
        <begin position="320"/>
        <end position="328"/>
    </location>
</feature>
<feature type="repeat" description="WIID 3">
    <location>
        <begin position="399"/>
        <end position="407"/>
    </location>
</feature>
<feature type="repeat" description="WIID 4">
    <location>
        <begin position="446"/>
        <end position="454"/>
    </location>
</feature>
<feature type="repeat" description="WIID 5">
    <location>
        <begin position="477"/>
        <end position="485"/>
    </location>
</feature>
<feature type="repeat" description="WIID 6">
    <location>
        <begin position="528"/>
        <end position="536"/>
    </location>
</feature>
<feature type="domain" description="LDL-receptor class A 1" evidence="3">
    <location>
        <begin position="889"/>
        <end position="929"/>
    </location>
</feature>
<feature type="domain" description="LDL-receptor class A 2; truncated" evidence="3">
    <location>
        <begin position="929"/>
        <end position="956"/>
    </location>
</feature>
<feature type="domain" description="LDL-receptor class A 3" evidence="3">
    <location>
        <begin position="955"/>
        <end position="1006"/>
    </location>
</feature>
<feature type="domain" description="Peptidase S1 1" evidence="4">
    <location>
        <begin position="1145"/>
        <end position="1383"/>
    </location>
</feature>
<feature type="domain" description="LDL-receptor class A 4" evidence="3">
    <location>
        <begin position="1394"/>
        <end position="1432"/>
    </location>
</feature>
<feature type="domain" description="LDL-receptor class A 5; truncated" evidence="3">
    <location>
        <begin position="1713"/>
        <end position="1743"/>
    </location>
</feature>
<feature type="domain" description="LDL-receptor class A 6; truncated" evidence="3">
    <location>
        <begin position="1745"/>
        <end position="1775"/>
    </location>
</feature>
<feature type="domain" description="LDL-receptor class A 7" evidence="3">
    <location>
        <begin position="1774"/>
        <end position="1813"/>
    </location>
</feature>
<feature type="domain" description="Peptidase S1 2" evidence="4">
    <location>
        <begin position="2027"/>
        <end position="2301"/>
    </location>
</feature>
<feature type="domain" description="LDL-receptor class A 8" evidence="3">
    <location>
        <begin position="2308"/>
        <end position="2346"/>
    </location>
</feature>
<feature type="domain" description="LDL-receptor class A 9" evidence="3">
    <location>
        <begin position="2349"/>
        <end position="2389"/>
    </location>
</feature>
<feature type="domain" description="LDL-receptor class A 10; truncated" evidence="3">
    <location>
        <begin position="2387"/>
        <end position="2419"/>
    </location>
</feature>
<feature type="domain" description="LDL-receptor class A 11" evidence="3">
    <location>
        <begin position="2419"/>
        <end position="2459"/>
    </location>
</feature>
<feature type="region of interest" description="Disordered" evidence="5">
    <location>
        <begin position="352"/>
        <end position="375"/>
    </location>
</feature>
<feature type="region of interest" description="Disordered" evidence="5">
    <location>
        <begin position="537"/>
        <end position="574"/>
    </location>
</feature>
<feature type="region of interest" description="Disordered" evidence="5">
    <location>
        <begin position="798"/>
        <end position="817"/>
    </location>
</feature>
<feature type="region of interest" description="Disordered" evidence="5">
    <location>
        <begin position="1530"/>
        <end position="1557"/>
    </location>
</feature>
<feature type="region of interest" description="Disordered" evidence="5">
    <location>
        <begin position="1683"/>
        <end position="1704"/>
    </location>
</feature>
<feature type="short sequence motif" description="Cell attachment site" evidence="2">
    <location>
        <begin position="1031"/>
        <end position="1033"/>
    </location>
</feature>
<feature type="compositionally biased region" description="Low complexity" evidence="5">
    <location>
        <begin position="537"/>
        <end position="547"/>
    </location>
</feature>
<feature type="compositionally biased region" description="Polar residues" evidence="5">
    <location>
        <begin position="548"/>
        <end position="565"/>
    </location>
</feature>
<feature type="compositionally biased region" description="Polar residues" evidence="5">
    <location>
        <begin position="804"/>
        <end position="817"/>
    </location>
</feature>
<feature type="compositionally biased region" description="Low complexity" evidence="5">
    <location>
        <begin position="1537"/>
        <end position="1557"/>
    </location>
</feature>
<feature type="compositionally biased region" description="Low complexity" evidence="5">
    <location>
        <begin position="1683"/>
        <end position="1700"/>
    </location>
</feature>
<feature type="active site" description="Charge relay system" evidence="1">
    <location>
        <position position="1185"/>
    </location>
</feature>
<feature type="active site" description="Charge relay system" evidence="1">
    <location>
        <position position="1233"/>
    </location>
</feature>
<feature type="active site" description="Charge relay system" evidence="1">
    <location>
        <position position="1332"/>
    </location>
</feature>
<feature type="modified residue" description="Phosphoserine" evidence="6">
    <location>
        <position position="215"/>
    </location>
</feature>
<feature type="modified residue" description="Phosphoserine" evidence="6">
    <location>
        <position position="220"/>
    </location>
</feature>
<feature type="modified residue" description="Phosphoserine" evidence="6">
    <location>
        <position position="574"/>
    </location>
</feature>
<feature type="modified residue" description="Phosphoserine" evidence="6">
    <location>
        <position position="581"/>
    </location>
</feature>
<feature type="modified residue" description="Phosphoserine" evidence="6">
    <location>
        <position position="1134"/>
    </location>
</feature>
<feature type="modified residue" description="Phosphoserine" evidence="6">
    <location>
        <position position="1136"/>
    </location>
</feature>
<feature type="glycosylation site" description="N-linked (GlcNAc...) asparagine" evidence="2">
    <location>
        <position position="291"/>
    </location>
</feature>
<feature type="glycosylation site" description="N-linked (GlcNAc...) asparagine" evidence="2">
    <location>
        <position position="347"/>
    </location>
</feature>
<feature type="glycosylation site" description="N-linked (GlcNAc...) asparagine" evidence="2">
    <location>
        <position position="379"/>
    </location>
</feature>
<feature type="glycosylation site" description="N-linked (GlcNAc...) asparagine" evidence="2">
    <location>
        <position position="417"/>
    </location>
</feature>
<feature type="glycosylation site" description="N-linked (GlcNAc...) asparagine" evidence="2">
    <location>
        <position position="492"/>
    </location>
</feature>
<feature type="glycosylation site" description="N-linked (GlcNAc...) asparagine" evidence="2">
    <location>
        <position position="515"/>
    </location>
</feature>
<feature type="glycosylation site" description="N-linked (GlcNAc...) asparagine" evidence="2">
    <location>
        <position position="598"/>
    </location>
</feature>
<feature type="glycosylation site" description="O-linked (Xyl...) (glycosaminoglycan) serine" evidence="2">
    <location>
        <position position="794"/>
    </location>
</feature>
<feature type="glycosylation site" description="N-linked (GlcNAc...) asparagine" evidence="2">
    <location>
        <position position="827"/>
    </location>
</feature>
<feature type="glycosylation site" description="O-linked (Xyl...) (glycosaminoglycan) serine" evidence="2">
    <location>
        <position position="829"/>
    </location>
</feature>
<feature type="glycosylation site" description="N-linked (GlcNAc...) asparagine" evidence="2">
    <location>
        <position position="861"/>
    </location>
</feature>
<feature type="glycosylation site" description="N-linked (GlcNAc...) asparagine" evidence="2">
    <location>
        <position position="975"/>
    </location>
</feature>
<feature type="glycosylation site" description="N-linked (GlcNAc...) asparagine" evidence="2">
    <location>
        <position position="1064"/>
    </location>
</feature>
<feature type="glycosylation site" description="N-linked (GlcNAc...) asparagine" evidence="2">
    <location>
        <position position="1445"/>
    </location>
</feature>
<feature type="glycosylation site" description="N-linked (GlcNAc...) asparagine" evidence="2">
    <location>
        <position position="1878"/>
    </location>
</feature>
<feature type="glycosylation site" description="N-linked (GlcNAc...) asparagine" evidence="2">
    <location>
        <position position="1956"/>
    </location>
</feature>
<feature type="glycosylation site" description="N-linked (GlcNAc...) asparagine" evidence="2">
    <location>
        <position position="2023"/>
    </location>
</feature>
<feature type="glycosylation site" description="N-linked (GlcNAc...) asparagine" evidence="2">
    <location>
        <position position="2144"/>
    </location>
</feature>
<feature type="glycosylation site" description="N-linked (GlcNAc...) asparagine" evidence="2">
    <location>
        <position position="2173"/>
    </location>
</feature>
<feature type="glycosylation site" description="N-linked (GlcNAc...) asparagine" evidence="2">
    <location>
        <position position="2197"/>
    </location>
</feature>
<feature type="glycosylation site" description="N-linked (GlcNAc...) asparagine" evidence="2">
    <location>
        <position position="2237"/>
    </location>
</feature>
<feature type="glycosylation site" description="N-linked (GlcNAc...) asparagine" evidence="2">
    <location>
        <position position="2269"/>
    </location>
</feature>
<feature type="glycosylation site" description="N-linked (GlcNAc...) asparagine" evidence="2">
    <location>
        <position position="2420"/>
    </location>
</feature>
<feature type="glycosylation site" description="N-linked (GlcNAc...) asparagine" evidence="2">
    <location>
        <position position="2556"/>
    </location>
</feature>
<feature type="glycosylation site" description="N-linked (GlcNAc...) asparagine" evidence="2">
    <location>
        <position position="2601"/>
    </location>
</feature>
<feature type="disulfide bond" evidence="1">
    <location>
        <begin position="891"/>
        <end position="905"/>
    </location>
</feature>
<feature type="disulfide bond" evidence="1">
    <location>
        <begin position="899"/>
        <end position="918"/>
    </location>
</feature>
<feature type="disulfide bond" evidence="1">
    <location>
        <begin position="912"/>
        <end position="927"/>
    </location>
</feature>
<feature type="disulfide bond" evidence="1">
    <location>
        <begin position="957"/>
        <end position="982"/>
    </location>
</feature>
<feature type="disulfide bond" evidence="1">
    <location>
        <begin position="964"/>
        <end position="995"/>
    </location>
</feature>
<feature type="disulfide bond" evidence="1">
    <location>
        <begin position="989"/>
        <end position="1004"/>
    </location>
</feature>
<feature type="disulfide bond" evidence="1">
    <location>
        <begin position="1170"/>
        <end position="1186"/>
    </location>
</feature>
<feature type="disulfide bond" evidence="2">
    <location>
        <begin position="1276"/>
        <end position="1338"/>
    </location>
</feature>
<feature type="disulfide bond" evidence="1">
    <location>
        <begin position="1305"/>
        <end position="1317"/>
    </location>
</feature>
<feature type="disulfide bond" evidence="1">
    <location>
        <begin position="1328"/>
        <end position="1359"/>
    </location>
</feature>
<feature type="disulfide bond" evidence="1">
    <location>
        <begin position="1396"/>
        <end position="1408"/>
    </location>
</feature>
<feature type="disulfide bond" evidence="1">
    <location>
        <begin position="1401"/>
        <end position="1421"/>
    </location>
</feature>
<feature type="disulfide bond" evidence="1">
    <location>
        <begin position="1415"/>
        <end position="1430"/>
    </location>
</feature>
<feature type="disulfide bond" evidence="1">
    <location>
        <begin position="1728"/>
        <end position="1745"/>
    </location>
</feature>
<feature type="disulfide bond" evidence="1">
    <location>
        <begin position="1734"/>
        <end position="1764"/>
    </location>
</feature>
<feature type="disulfide bond" evidence="1">
    <location>
        <begin position="1758"/>
        <end position="1773"/>
    </location>
</feature>
<feature type="disulfide bond" evidence="1">
    <location>
        <begin position="1776"/>
        <end position="1789"/>
    </location>
</feature>
<feature type="disulfide bond" evidence="1">
    <location>
        <begin position="1783"/>
        <end position="1802"/>
    </location>
</feature>
<feature type="disulfide bond" evidence="1">
    <location>
        <begin position="1796"/>
        <end position="1811"/>
    </location>
</feature>
<feature type="disulfide bond" evidence="1">
    <location>
        <begin position="2055"/>
        <end position="2071"/>
    </location>
</feature>
<feature type="disulfide bond" evidence="1">
    <location>
        <begin position="2177"/>
        <end position="2230"/>
    </location>
</feature>
<feature type="disulfide bond" evidence="1">
    <location>
        <begin position="2310"/>
        <end position="2320"/>
    </location>
</feature>
<feature type="disulfide bond" evidence="1">
    <location>
        <begin position="2315"/>
        <end position="2333"/>
    </location>
</feature>
<feature type="disulfide bond" evidence="1">
    <location>
        <begin position="2327"/>
        <end position="2344"/>
    </location>
</feature>
<feature type="disulfide bond" evidence="1">
    <location>
        <begin position="2351"/>
        <end position="2364"/>
    </location>
</feature>
<feature type="disulfide bond" evidence="1">
    <location>
        <begin position="2358"/>
        <end position="2377"/>
    </location>
</feature>
<feature type="disulfide bond" evidence="1">
    <location>
        <begin position="2371"/>
        <end position="2387"/>
    </location>
</feature>
<feature type="disulfide bond" evidence="1">
    <location>
        <begin position="2421"/>
        <end position="2435"/>
    </location>
</feature>
<feature type="disulfide bond" evidence="1">
    <location>
        <begin position="2428"/>
        <end position="2448"/>
    </location>
</feature>
<feature type="disulfide bond" evidence="1">
    <location>
        <begin position="2442"/>
        <end position="2457"/>
    </location>
</feature>
<feature type="sequence conflict" description="In Ref. 1; AAA83086." evidence="10" ref="1">
    <original>I</original>
    <variation>T</variation>
    <location>
        <position position="83"/>
    </location>
</feature>
<feature type="sequence conflict" description="In Ref. 1; AAA83086." evidence="10" ref="1">
    <original>F</original>
    <variation>L</variation>
    <location>
        <position position="120"/>
    </location>
</feature>
<feature type="sequence conflict" description="In Ref. 1; AAA83086." evidence="10" ref="1">
    <original>N</original>
    <variation>T</variation>
    <location>
        <position position="363"/>
    </location>
</feature>
<feature type="sequence conflict" description="In Ref. 1; AAA83086." evidence="10" ref="1">
    <original>Q</original>
    <variation>R</variation>
    <location>
        <position position="831"/>
    </location>
</feature>
<feature type="sequence conflict" description="In Ref. 1; AAA83086." evidence="10" ref="1">
    <original>N</original>
    <variation>S</variation>
    <location>
        <position position="864"/>
    </location>
</feature>
<feature type="sequence conflict" description="In Ref. 1; AAA83086." evidence="10" ref="1">
    <original>Y</original>
    <variation>H</variation>
    <location>
        <position position="1150"/>
    </location>
</feature>
<feature type="sequence conflict" description="In Ref. 1; AAA83086." evidence="10" ref="1">
    <original>P</original>
    <variation>A</variation>
    <location>
        <position position="1344"/>
    </location>
</feature>
<feature type="sequence conflict" description="In Ref. 1; AAA83086." evidence="10" ref="1">
    <original>A</original>
    <variation>S</variation>
    <location>
        <position position="1410"/>
    </location>
</feature>
<feature type="sequence conflict" description="In Ref. 1; AAA83086." evidence="10" ref="1">
    <original>I</original>
    <variation>M</variation>
    <location>
        <position position="1607"/>
    </location>
</feature>
<feature type="sequence conflict" description="In Ref. 1; AAA83086." evidence="10" ref="1">
    <original>K</original>
    <variation>I</variation>
    <location>
        <position position="1632"/>
    </location>
</feature>
<feature type="sequence conflict" description="In Ref. 1; AAA83086." evidence="10" ref="1">
    <original>L</original>
    <variation>P</variation>
    <location>
        <position position="1670"/>
    </location>
</feature>
<feature type="sequence conflict" description="In Ref. 1; AAA83086." evidence="10" ref="1">
    <original>S</original>
    <variation>K</variation>
    <location>
        <position position="1794"/>
    </location>
</feature>
<feature type="sequence conflict" description="In Ref. 1; AAA83086." evidence="10" ref="1">
    <original>D</original>
    <variation>N</variation>
    <location>
        <position position="1863"/>
    </location>
</feature>
<feature type="sequence conflict" description="In Ref. 1; AAA83086." evidence="10" ref="1">
    <original>HEM</original>
    <variation>QEK</variation>
    <location>
        <begin position="1886"/>
        <end position="1888"/>
    </location>
</feature>
<feature type="sequence conflict" description="In Ref. 1; AAA83086." evidence="10" ref="1">
    <original>S</original>
    <variation>A</variation>
    <location>
        <position position="1903"/>
    </location>
</feature>
<feature type="sequence conflict" description="In Ref. 1; AAA83086." evidence="10" ref="1">
    <original>H</original>
    <variation>N</variation>
    <location>
        <position position="2147"/>
    </location>
</feature>
<accession>P98159</accession>
<accession>Q9VRX5</accession>
<dbReference type="EC" id="3.4.21.-" evidence="4"/>
<dbReference type="EMBL" id="U29153">
    <property type="protein sequence ID" value="AAA83086.1"/>
    <property type="molecule type" value="mRNA"/>
</dbReference>
<dbReference type="EMBL" id="AE014296">
    <property type="protein sequence ID" value="AAF50656.1"/>
    <property type="molecule type" value="Genomic_DNA"/>
</dbReference>
<dbReference type="PIR" id="A57096">
    <property type="entry name" value="A57096"/>
</dbReference>
<dbReference type="RefSeq" id="NP_523947.2">
    <property type="nucleotide sequence ID" value="NM_079223.2"/>
</dbReference>
<dbReference type="SMR" id="P98159"/>
<dbReference type="BioGRID" id="64189">
    <property type="interactions" value="1"/>
</dbReference>
<dbReference type="FunCoup" id="P98159">
    <property type="interactions" value="23"/>
</dbReference>
<dbReference type="IntAct" id="P98159">
    <property type="interactions" value="3"/>
</dbReference>
<dbReference type="STRING" id="7227.FBpp0076693"/>
<dbReference type="MEROPS" id="S01.013"/>
<dbReference type="GlyCosmos" id="P98159">
    <property type="glycosylation" value="25 sites, No reported glycans"/>
</dbReference>
<dbReference type="GlyGen" id="P98159">
    <property type="glycosylation" value="25 sites"/>
</dbReference>
<dbReference type="iPTMnet" id="P98159"/>
<dbReference type="PaxDb" id="7227-FBpp0076693"/>
<dbReference type="EnsemblMetazoa" id="FBtr0076984">
    <property type="protein sequence ID" value="FBpp0076693"/>
    <property type="gene ID" value="FBgn0002926"/>
</dbReference>
<dbReference type="GeneID" id="38738"/>
<dbReference type="KEGG" id="dme:Dmel_CG10129"/>
<dbReference type="UCSC" id="CG10129-RA">
    <property type="organism name" value="d. melanogaster"/>
</dbReference>
<dbReference type="AGR" id="FB:FBgn0002926"/>
<dbReference type="CTD" id="38738"/>
<dbReference type="FlyBase" id="FBgn0002926">
    <property type="gene designation" value="ndl"/>
</dbReference>
<dbReference type="VEuPathDB" id="VectorBase:FBgn0002926"/>
<dbReference type="eggNOG" id="KOG3627">
    <property type="taxonomic scope" value="Eukaryota"/>
</dbReference>
<dbReference type="HOGENOM" id="CLU_228608_0_0_1"/>
<dbReference type="InParanoid" id="P98159"/>
<dbReference type="OMA" id="DCMSAFL"/>
<dbReference type="OrthoDB" id="10016557at2759"/>
<dbReference type="PhylomeDB" id="P98159"/>
<dbReference type="BioGRID-ORCS" id="38738">
    <property type="hits" value="0 hits in 1 CRISPR screen"/>
</dbReference>
<dbReference type="GenomeRNAi" id="38738"/>
<dbReference type="PRO" id="PR:P98159"/>
<dbReference type="Proteomes" id="UP000000803">
    <property type="component" value="Chromosome 3L"/>
</dbReference>
<dbReference type="Bgee" id="FBgn0002926">
    <property type="expression patterns" value="Expressed in posterior terminal follicle cell in ovary and 14 other cell types or tissues"/>
</dbReference>
<dbReference type="GO" id="GO:0005576">
    <property type="term" value="C:extracellular region"/>
    <property type="evidence" value="ECO:0000314"/>
    <property type="project" value="FlyBase"/>
</dbReference>
<dbReference type="GO" id="GO:0098595">
    <property type="term" value="C:perivitelline space"/>
    <property type="evidence" value="ECO:0000314"/>
    <property type="project" value="FlyBase"/>
</dbReference>
<dbReference type="GO" id="GO:0004252">
    <property type="term" value="F:serine-type endopeptidase activity"/>
    <property type="evidence" value="ECO:0000315"/>
    <property type="project" value="FlyBase"/>
</dbReference>
<dbReference type="GO" id="GO:0009950">
    <property type="term" value="P:dorsal/ventral axis specification"/>
    <property type="evidence" value="ECO:0000315"/>
    <property type="project" value="FlyBase"/>
</dbReference>
<dbReference type="GO" id="GO:0007343">
    <property type="term" value="P:egg activation"/>
    <property type="evidence" value="ECO:0000315"/>
    <property type="project" value="FlyBase"/>
</dbReference>
<dbReference type="GO" id="GO:0007306">
    <property type="term" value="P:egg chorion assembly"/>
    <property type="evidence" value="ECO:0000315"/>
    <property type="project" value="FlyBase"/>
</dbReference>
<dbReference type="GO" id="GO:0016540">
    <property type="term" value="P:protein autoprocessing"/>
    <property type="evidence" value="ECO:0000315"/>
    <property type="project" value="FlyBase"/>
</dbReference>
<dbReference type="GO" id="GO:0016485">
    <property type="term" value="P:protein processing"/>
    <property type="evidence" value="ECO:0000315"/>
    <property type="project" value="FlyBase"/>
</dbReference>
<dbReference type="GO" id="GO:0006508">
    <property type="term" value="P:proteolysis"/>
    <property type="evidence" value="ECO:0000255"/>
    <property type="project" value="FlyBase"/>
</dbReference>
<dbReference type="GO" id="GO:0160032">
    <property type="term" value="P:Toll receptor ligand protein activation cascade"/>
    <property type="evidence" value="ECO:0000314"/>
    <property type="project" value="FlyBase"/>
</dbReference>
<dbReference type="GO" id="GO:0031638">
    <property type="term" value="P:zymogen activation"/>
    <property type="evidence" value="ECO:0000315"/>
    <property type="project" value="FlyBase"/>
</dbReference>
<dbReference type="CDD" id="cd00112">
    <property type="entry name" value="LDLa"/>
    <property type="match status" value="7"/>
</dbReference>
<dbReference type="CDD" id="cd00190">
    <property type="entry name" value="Tryp_SPc"/>
    <property type="match status" value="1"/>
</dbReference>
<dbReference type="FunFam" id="2.40.10.10:FF:000111">
    <property type="entry name" value="Blast:Serine protease nudel"/>
    <property type="match status" value="1"/>
</dbReference>
<dbReference type="FunFam" id="2.40.10.10:FF:000200">
    <property type="entry name" value="Serine protease nudel"/>
    <property type="match status" value="1"/>
</dbReference>
<dbReference type="FunFam" id="4.10.400.10:FF:000201">
    <property type="entry name" value="Serine protease nudel"/>
    <property type="match status" value="1"/>
</dbReference>
<dbReference type="FunFam" id="4.10.400.10:FF:000210">
    <property type="entry name" value="Serine protease nudel"/>
    <property type="match status" value="1"/>
</dbReference>
<dbReference type="FunFam" id="4.10.400.10:FF:000244">
    <property type="entry name" value="Serine protease nudel"/>
    <property type="match status" value="1"/>
</dbReference>
<dbReference type="Gene3D" id="4.10.400.10">
    <property type="entry name" value="Low-density Lipoprotein Receptor"/>
    <property type="match status" value="7"/>
</dbReference>
<dbReference type="Gene3D" id="2.40.10.10">
    <property type="entry name" value="Trypsin-like serine proteases"/>
    <property type="match status" value="2"/>
</dbReference>
<dbReference type="InterPro" id="IPR036055">
    <property type="entry name" value="LDL_receptor-like_sf"/>
</dbReference>
<dbReference type="InterPro" id="IPR023415">
    <property type="entry name" value="LDLR_class-A_CS"/>
</dbReference>
<dbReference type="InterPro" id="IPR002172">
    <property type="entry name" value="LDrepeatLR_classA_rpt"/>
</dbReference>
<dbReference type="InterPro" id="IPR009003">
    <property type="entry name" value="Peptidase_S1_PA"/>
</dbReference>
<dbReference type="InterPro" id="IPR043504">
    <property type="entry name" value="Peptidase_S1_PA_chymotrypsin"/>
</dbReference>
<dbReference type="InterPro" id="IPR015420">
    <property type="entry name" value="Peptidase_S1A_nudel"/>
</dbReference>
<dbReference type="InterPro" id="IPR001254">
    <property type="entry name" value="Trypsin_dom"/>
</dbReference>
<dbReference type="InterPro" id="IPR018114">
    <property type="entry name" value="TRYPSIN_HIS"/>
</dbReference>
<dbReference type="InterPro" id="IPR033116">
    <property type="entry name" value="TRYPSIN_SER"/>
</dbReference>
<dbReference type="PANTHER" id="PTHR24258:SF116">
    <property type="entry name" value="FI16631P1-RELATED"/>
    <property type="match status" value="1"/>
</dbReference>
<dbReference type="PANTHER" id="PTHR24258">
    <property type="entry name" value="SERINE PROTEASE-RELATED"/>
    <property type="match status" value="1"/>
</dbReference>
<dbReference type="Pfam" id="PF09342">
    <property type="entry name" value="DUF1986"/>
    <property type="match status" value="1"/>
</dbReference>
<dbReference type="Pfam" id="PF00057">
    <property type="entry name" value="Ldl_recept_a"/>
    <property type="match status" value="4"/>
</dbReference>
<dbReference type="Pfam" id="PF00089">
    <property type="entry name" value="Trypsin"/>
    <property type="match status" value="1"/>
</dbReference>
<dbReference type="PRINTS" id="PR00261">
    <property type="entry name" value="LDLRECEPTOR"/>
</dbReference>
<dbReference type="SMART" id="SM00192">
    <property type="entry name" value="LDLa"/>
    <property type="match status" value="9"/>
</dbReference>
<dbReference type="SMART" id="SM00020">
    <property type="entry name" value="Tryp_SPc"/>
    <property type="match status" value="1"/>
</dbReference>
<dbReference type="SUPFAM" id="SSF57424">
    <property type="entry name" value="LDL receptor-like module"/>
    <property type="match status" value="7"/>
</dbReference>
<dbReference type="SUPFAM" id="SSF50494">
    <property type="entry name" value="Trypsin-like serine proteases"/>
    <property type="match status" value="2"/>
</dbReference>
<dbReference type="PROSITE" id="PS01209">
    <property type="entry name" value="LDLRA_1"/>
    <property type="match status" value="6"/>
</dbReference>
<dbReference type="PROSITE" id="PS50068">
    <property type="entry name" value="LDLRA_2"/>
    <property type="match status" value="8"/>
</dbReference>
<dbReference type="PROSITE" id="PS50240">
    <property type="entry name" value="TRYPSIN_DOM"/>
    <property type="match status" value="2"/>
</dbReference>
<dbReference type="PROSITE" id="PS00134">
    <property type="entry name" value="TRYPSIN_HIS"/>
    <property type="match status" value="1"/>
</dbReference>
<dbReference type="PROSITE" id="PS00135">
    <property type="entry name" value="TRYPSIN_SER"/>
    <property type="match status" value="1"/>
</dbReference>
<sequence length="2616" mass="292492">MNYNMDEMEATRLLRHPRRWWSIGFGKRIVAISILVIIVLLFSLVYHGLVVEKIDQVQQIAALNARHQVLFNQPFEEDQSALIVSPQTLHFKLLDEDMNKDMEDSKNRRRKHMRQMLVKFRLNKKHRMRRDLHGLDLLDPVRMEANMQHLYTKLRSKRAREALSQLEHEFVRCKKHTPQDCMSAFLRMYKMAKEVTEKMEKMKAIMREQQPKLESSSMESHEQKGTFSPADLIQVTTAEATTVAVHATEKPARTKIKPSRISWIIDGHDHDESPVYTDGAPKKETTKAPWNTTQLVEITTTKIDATATERTTVESTTEKISWILDHFDKPQEILRTTEGPGQRIIRNVTTTSASSEPIVDTENTNSDHVPTTENGLVFNITTDGPVETTKSTAQRKLSFDWILDGEENVEPEVKSTNTTTTTAATTTTGATSETIIVTTELPKITFDWIIDGREVVEPQETTTEVTGTTERLRKMPFDWIIDGEEVVEPQENVTTTTIATTVAVSTTEINERIHNSTAYPTKPKPVKFDWIIDGGESSGEVSTSSTSQPKLTTREAISNPESPRSSHPLDNPTSIENMLESFEQHEEQKPILRVLNANESSSETVTDGYERQLWLKKFEDQARPNQNELIDTFGTALDAKALDKMGPKINPLNGHTWNAADAQILSLCERVALRMRNKVATMSDGETKEKGETFTASPSVQFTSRAPGGFPVSGETMKASAQFMFNPNFGMPSIPVCFYMTPANFRMPMWSNTPTFMGMQGAHFGGSSNPGAGIFFVPQQFGPSGNFFGGSGGSGAGGQGANIFSKNASPQKPTNGQQQVYCSYMQNQSGQGAGQSQTSSQQQQGGQSAFSNANFKMRHANQTNTANQQGQIIYASYAGLPQQPIQERSRCPEPDQFSCFGQQECIPAARWCDNVVDCSDGSDESACTCADRVDEERLCDGYEDCPMGEDELGCFGCESLAYSCYENPQDFAKRNRSTISMCYSRLERCDGFMNCLNGRDEEQCSMLVTDVADHMSHGASASEGYLYHNYRGDWHPVCNNGEKWAALACQMDENSRMDHSASLNVSFQTLTLPGPFIEPSLHAGVHFAQACHGRNSHDSLVDHVAYVKCPPMQCGLPSKSSMLEHSKRVRRAVSDSKEIVGDGRIVGGSYTSALQWPFVVAIYRNGKFHCGGTIYSDRWIISAAHCVINYGKYFYEVRAGLLRRSSYSPATQIQPVSHVVVHQAYERRSMRNDLSLLRLLNPLQFNRWVKPICLPDKGRTTVGDDWIWGPVEHTLCTVVGWGAIREKGPSSDPMRQVIVPIRKKCTDPEDQASEDICAGDPDGGRDACQGDSGGPLFCRSVSNPDEFYLAGVVSHGNGCARPQEFGVYTRVTLYLDWLEMATTPRLLPKLQPLQLCPGFICVWGGKRCIAKRQRCDRNVDCLGGEDEVGCTYNFLPDMVGGVRQNISTTTESDYHPVKESEEKSKMREVIPIDDEDLKAEQDEEDLLKSTTSLGQTETTQGPMDLSFAEQITSTTSDDLSITDETTSTDFTVSDSATSPSTLLPTTTNPSTWLPSTNIETSTFSFTTTESEASTKQETLPTTVAQTTTIPTSTEDLKKLTDLVTEFIESTTFETTMEVETTTLSLTSTDAPKLVTTEGVKETTTTEDTTTISSIVTLTTTPLATISTTILTTEKHVAVTTLAPTTTTESAKTTTTHSSSTHSEKDQIQIPNKFVCKKMSQIVDIMMRCDRKVDCEDGTDELDCTCKDYLKGSLKGLICDGKADCEDLTDEQNCVECQSNEFRCPLSKTCLPLSSRCDNKVDCKFKEDEKDCFALTNGHDVHFDVHQQPKFSSTGIFSRNGHGVWRVVCAHETGYHEHQAKTADAVCALLGFNGAHYFNSSEFVTQHEMQPITPELKGGRNRMSAQIHSMVGDNVQFTENEVIIPELGHPSASRPEKDRLLPRKCVGIYVECNPYSNKTTPLKTFSAGQVVKEKPIEQVPVLSPTIETHNTPNVHFKPQIPAMVVNKKDEILDRLDKLIKSKKNKTILVNEQLHEAIEELHWPWLADVYMNGDLWCIGVLIDKHWVMVHESCLSGIDLETHYVSVLLGGGKTKRSAHRSNHEQIRRVDCFEGVPKSNVLLLHLERPVRFTHHVLPTFLPDSSHQNQSHARQCISVLHDDATGRIKTVAITRIHNATNCDSCYKLQEKQPPANLMRLLNVSAEDMASISEEVELINGVAPTELPAITKFTTCNQFGLKNVSDAHHNPSDQGVLVCRDSHTGWFPTALFNYNNSDCQSFKQPFGIRTLELVYKSLQDIIDKPSCKMLLPAPDCSTHRCPLGTCLPQAAMCNGRSDCHDGSDEEETKCRQQKQQCAPGEMKCRTSFKCVPKSKFCDHVPDCEDMTDEPTICSCFTYLQATDPSKICDGKRNCWDKSDESSVLCNCTADHFQCSSSPEDCIPRDFVCDKEKDCPNGEDERYCFGIEHPLHLQKKDFWTNSQHTQPEIAPQYGQVIEQTYGIWHTKCFPKSKPPQVDEVREICKKLGYNPYRQPSYRLIDDEENKPVHTYELADRQGRSFSNESLMGKYRDSTKALIISKFSPLQLNERLTLFLKSSRPIAELVRWNATDSSMCYRLEIRCA</sequence>
<organism evidence="14">
    <name type="scientific">Drosophila melanogaster</name>
    <name type="common">Fruit fly</name>
    <dbReference type="NCBI Taxonomy" id="7227"/>
    <lineage>
        <taxon>Eukaryota</taxon>
        <taxon>Metazoa</taxon>
        <taxon>Ecdysozoa</taxon>
        <taxon>Arthropoda</taxon>
        <taxon>Hexapoda</taxon>
        <taxon>Insecta</taxon>
        <taxon>Pterygota</taxon>
        <taxon>Neoptera</taxon>
        <taxon>Endopterygota</taxon>
        <taxon>Diptera</taxon>
        <taxon>Brachycera</taxon>
        <taxon>Muscomorpha</taxon>
        <taxon>Ephydroidea</taxon>
        <taxon>Drosophilidae</taxon>
        <taxon>Drosophila</taxon>
        <taxon>Sophophora</taxon>
    </lineage>
</organism>
<reference key="1">
    <citation type="journal article" date="1995" name="Cell">
        <title>An unusual mosaic protein with a protease domain, encoded by the nudel gene, is involved in defining embryonic dorsoventral polarity in Drosophila.</title>
        <authorList>
            <person name="Hong C.C."/>
            <person name="Hashimoto C."/>
        </authorList>
    </citation>
    <scope>NUCLEOTIDE SEQUENCE [MRNA]</scope>
    <scope>FUNCTION</scope>
    <scope>SUBCELLULAR LOCATION</scope>
    <scope>TISSUE SPECIFICITY</scope>
    <source>
        <strain>Oregon-R</strain>
        <tissue>Ovary</tissue>
    </source>
</reference>
<reference key="2">
    <citation type="journal article" date="2000" name="Science">
        <title>The genome sequence of Drosophila melanogaster.</title>
        <authorList>
            <person name="Adams M.D."/>
            <person name="Celniker S.E."/>
            <person name="Holt R.A."/>
            <person name="Evans C.A."/>
            <person name="Gocayne J.D."/>
            <person name="Amanatides P.G."/>
            <person name="Scherer S.E."/>
            <person name="Li P.W."/>
            <person name="Hoskins R.A."/>
            <person name="Galle R.F."/>
            <person name="George R.A."/>
            <person name="Lewis S.E."/>
            <person name="Richards S."/>
            <person name="Ashburner M."/>
            <person name="Henderson S.N."/>
            <person name="Sutton G.G."/>
            <person name="Wortman J.R."/>
            <person name="Yandell M.D."/>
            <person name="Zhang Q."/>
            <person name="Chen L.X."/>
            <person name="Brandon R.C."/>
            <person name="Rogers Y.-H.C."/>
            <person name="Blazej R.G."/>
            <person name="Champe M."/>
            <person name="Pfeiffer B.D."/>
            <person name="Wan K.H."/>
            <person name="Doyle C."/>
            <person name="Baxter E.G."/>
            <person name="Helt G."/>
            <person name="Nelson C.R."/>
            <person name="Miklos G.L.G."/>
            <person name="Abril J.F."/>
            <person name="Agbayani A."/>
            <person name="An H.-J."/>
            <person name="Andrews-Pfannkoch C."/>
            <person name="Baldwin D."/>
            <person name="Ballew R.M."/>
            <person name="Basu A."/>
            <person name="Baxendale J."/>
            <person name="Bayraktaroglu L."/>
            <person name="Beasley E.M."/>
            <person name="Beeson K.Y."/>
            <person name="Benos P.V."/>
            <person name="Berman B.P."/>
            <person name="Bhandari D."/>
            <person name="Bolshakov S."/>
            <person name="Borkova D."/>
            <person name="Botchan M.R."/>
            <person name="Bouck J."/>
            <person name="Brokstein P."/>
            <person name="Brottier P."/>
            <person name="Burtis K.C."/>
            <person name="Busam D.A."/>
            <person name="Butler H."/>
            <person name="Cadieu E."/>
            <person name="Center A."/>
            <person name="Chandra I."/>
            <person name="Cherry J.M."/>
            <person name="Cawley S."/>
            <person name="Dahlke C."/>
            <person name="Davenport L.B."/>
            <person name="Davies P."/>
            <person name="de Pablos B."/>
            <person name="Delcher A."/>
            <person name="Deng Z."/>
            <person name="Mays A.D."/>
            <person name="Dew I."/>
            <person name="Dietz S.M."/>
            <person name="Dodson K."/>
            <person name="Doup L.E."/>
            <person name="Downes M."/>
            <person name="Dugan-Rocha S."/>
            <person name="Dunkov B.C."/>
            <person name="Dunn P."/>
            <person name="Durbin K.J."/>
            <person name="Evangelista C.C."/>
            <person name="Ferraz C."/>
            <person name="Ferriera S."/>
            <person name="Fleischmann W."/>
            <person name="Fosler C."/>
            <person name="Gabrielian A.E."/>
            <person name="Garg N.S."/>
            <person name="Gelbart W.M."/>
            <person name="Glasser K."/>
            <person name="Glodek A."/>
            <person name="Gong F."/>
            <person name="Gorrell J.H."/>
            <person name="Gu Z."/>
            <person name="Guan P."/>
            <person name="Harris M."/>
            <person name="Harris N.L."/>
            <person name="Harvey D.A."/>
            <person name="Heiman T.J."/>
            <person name="Hernandez J.R."/>
            <person name="Houck J."/>
            <person name="Hostin D."/>
            <person name="Houston K.A."/>
            <person name="Howland T.J."/>
            <person name="Wei M.-H."/>
            <person name="Ibegwam C."/>
            <person name="Jalali M."/>
            <person name="Kalush F."/>
            <person name="Karpen G.H."/>
            <person name="Ke Z."/>
            <person name="Kennison J.A."/>
            <person name="Ketchum K.A."/>
            <person name="Kimmel B.E."/>
            <person name="Kodira C.D."/>
            <person name="Kraft C.L."/>
            <person name="Kravitz S."/>
            <person name="Kulp D."/>
            <person name="Lai Z."/>
            <person name="Lasko P."/>
            <person name="Lei Y."/>
            <person name="Levitsky A.A."/>
            <person name="Li J.H."/>
            <person name="Li Z."/>
            <person name="Liang Y."/>
            <person name="Lin X."/>
            <person name="Liu X."/>
            <person name="Mattei B."/>
            <person name="McIntosh T.C."/>
            <person name="McLeod M.P."/>
            <person name="McPherson D."/>
            <person name="Merkulov G."/>
            <person name="Milshina N.V."/>
            <person name="Mobarry C."/>
            <person name="Morris J."/>
            <person name="Moshrefi A."/>
            <person name="Mount S.M."/>
            <person name="Moy M."/>
            <person name="Murphy B."/>
            <person name="Murphy L."/>
            <person name="Muzny D.M."/>
            <person name="Nelson D.L."/>
            <person name="Nelson D.R."/>
            <person name="Nelson K.A."/>
            <person name="Nixon K."/>
            <person name="Nusskern D.R."/>
            <person name="Pacleb J.M."/>
            <person name="Palazzolo M."/>
            <person name="Pittman G.S."/>
            <person name="Pan S."/>
            <person name="Pollard J."/>
            <person name="Puri V."/>
            <person name="Reese M.G."/>
            <person name="Reinert K."/>
            <person name="Remington K."/>
            <person name="Saunders R.D.C."/>
            <person name="Scheeler F."/>
            <person name="Shen H."/>
            <person name="Shue B.C."/>
            <person name="Siden-Kiamos I."/>
            <person name="Simpson M."/>
            <person name="Skupski M.P."/>
            <person name="Smith T.J."/>
            <person name="Spier E."/>
            <person name="Spradling A.C."/>
            <person name="Stapleton M."/>
            <person name="Strong R."/>
            <person name="Sun E."/>
            <person name="Svirskas R."/>
            <person name="Tector C."/>
            <person name="Turner R."/>
            <person name="Venter E."/>
            <person name="Wang A.H."/>
            <person name="Wang X."/>
            <person name="Wang Z.-Y."/>
            <person name="Wassarman D.A."/>
            <person name="Weinstock G.M."/>
            <person name="Weissenbach J."/>
            <person name="Williams S.M."/>
            <person name="Woodage T."/>
            <person name="Worley K.C."/>
            <person name="Wu D."/>
            <person name="Yang S."/>
            <person name="Yao Q.A."/>
            <person name="Ye J."/>
            <person name="Yeh R.-F."/>
            <person name="Zaveri J.S."/>
            <person name="Zhan M."/>
            <person name="Zhang G."/>
            <person name="Zhao Q."/>
            <person name="Zheng L."/>
            <person name="Zheng X.H."/>
            <person name="Zhong F.N."/>
            <person name="Zhong W."/>
            <person name="Zhou X."/>
            <person name="Zhu S.C."/>
            <person name="Zhu X."/>
            <person name="Smith H.O."/>
            <person name="Gibbs R.A."/>
            <person name="Myers E.W."/>
            <person name="Rubin G.M."/>
            <person name="Venter J.C."/>
        </authorList>
    </citation>
    <scope>NUCLEOTIDE SEQUENCE [LARGE SCALE GENOMIC DNA]</scope>
    <source>
        <strain>Berkeley</strain>
    </source>
</reference>
<reference key="3">
    <citation type="journal article" date="2002" name="Genome Biol.">
        <title>Annotation of the Drosophila melanogaster euchromatic genome: a systematic review.</title>
        <authorList>
            <person name="Misra S."/>
            <person name="Crosby M.A."/>
            <person name="Mungall C.J."/>
            <person name="Matthews B.B."/>
            <person name="Campbell K.S."/>
            <person name="Hradecky P."/>
            <person name="Huang Y."/>
            <person name="Kaminker J.S."/>
            <person name="Millburn G.H."/>
            <person name="Prochnik S.E."/>
            <person name="Smith C.D."/>
            <person name="Tupy J.L."/>
            <person name="Whitfield E.J."/>
            <person name="Bayraktaroglu L."/>
            <person name="Berman B.P."/>
            <person name="Bettencourt B.R."/>
            <person name="Celniker S.E."/>
            <person name="de Grey A.D.N.J."/>
            <person name="Drysdale R.A."/>
            <person name="Harris N.L."/>
            <person name="Richter J."/>
            <person name="Russo S."/>
            <person name="Schroeder A.J."/>
            <person name="Shu S.Q."/>
            <person name="Stapleton M."/>
            <person name="Yamada C."/>
            <person name="Ashburner M."/>
            <person name="Gelbart W.M."/>
            <person name="Rubin G.M."/>
            <person name="Lewis S.E."/>
        </authorList>
    </citation>
    <scope>GENOME REANNOTATION</scope>
    <source>
        <strain>Berkeley</strain>
    </source>
</reference>
<reference key="4">
    <citation type="journal article" date="1998" name="Development">
        <title>Positive and negative regulation of Easter, a member of the serine protease family that controls dorsal-ventral patterning in the Drosophila embryo.</title>
        <authorList>
            <person name="Misra S."/>
            <person name="Hecht P."/>
            <person name="Maeda R."/>
            <person name="Anderson K.V."/>
        </authorList>
    </citation>
    <scope>CLEAVAGE OF EASTER</scope>
</reference>
<reference key="5">
    <citation type="journal article" date="2008" name="J. Proteome Res.">
        <title>Phosphoproteome analysis of Drosophila melanogaster embryos.</title>
        <authorList>
            <person name="Zhai B."/>
            <person name="Villen J."/>
            <person name="Beausoleil S.A."/>
            <person name="Mintseris J."/>
            <person name="Gygi S.P."/>
        </authorList>
    </citation>
    <scope>PHOSPHORYLATION [LARGE SCALE ANALYSIS] AT SER-215; SER-220; SER-574; SER-581; SER-1134 AND SER-1136</scope>
    <scope>IDENTIFICATION BY MASS SPECTROMETRY</scope>
    <source>
        <tissue>Embryo</tissue>
    </source>
</reference>
<reference key="6">
    <citation type="journal article" date="2010" name="Curr. Biol.">
        <title>Pipe-dependent ventral processing of Easter by Snake is the defining step in Drosophila embryo DV axis formation.</title>
        <authorList>
            <person name="Cho Y.S."/>
            <person name="Stevens L.M."/>
            <person name="Stein D."/>
        </authorList>
    </citation>
    <scope>FUNCTION</scope>
</reference>
<keyword id="KW-0217">Developmental protein</keyword>
<keyword id="KW-1015">Disulfide bond</keyword>
<keyword id="KW-0272">Extracellular matrix</keyword>
<keyword id="KW-0325">Glycoprotein</keyword>
<keyword id="KW-0378">Hydrolase</keyword>
<keyword id="KW-0597">Phosphoprotein</keyword>
<keyword id="KW-0645">Protease</keyword>
<keyword id="KW-0654">Proteoglycan</keyword>
<keyword id="KW-1185">Reference proteome</keyword>
<keyword id="KW-0677">Repeat</keyword>
<keyword id="KW-0964">Secreted</keyword>
<keyword id="KW-0720">Serine protease</keyword>
<keyword id="KW-0732">Signal</keyword>
<keyword id="KW-0865">Zymogen</keyword>
<comment type="function">
    <text evidence="7 8 11 12">Component of the extracellular signaling pathway that establishes the dorsal-ventral pathway of the embryo (PubMed:7671306). A protease cascade involving ndl, gd, snk and ea results in activation of the spz Toll receptor ligand; acts upstream of gd, snk and ea and is required for proteolytic processing of gd (PubMed:20605458). Activation of ea requires activation of the ndl-gd-snk protease cascade and sulfation of a vitelline membrane component by pip (PubMed:20605458). Localized activation of the Toll receptor in the ventral region of the embryo defines cell identities along the dorsal-ventral continuum (Probable).</text>
</comment>
<comment type="subcellular location">
    <subcellularLocation>
        <location evidence="8">Secreted</location>
        <location evidence="8">Extracellular space</location>
        <location evidence="8">Extracellular matrix</location>
    </subcellularLocation>
</comment>
<comment type="tissue specificity">
    <text evidence="8">Follicle.</text>
</comment>
<comment type="PTM">
    <text evidence="9">Requires cleavage for activation (presumably).</text>
</comment>
<comment type="similarity">
    <text evidence="4">Belongs to the peptidase S1 family.</text>
</comment>
<evidence type="ECO:0000250" key="1"/>
<evidence type="ECO:0000255" key="2"/>
<evidence type="ECO:0000255" key="3">
    <source>
        <dbReference type="PROSITE-ProRule" id="PRU00124"/>
    </source>
</evidence>
<evidence type="ECO:0000255" key="4">
    <source>
        <dbReference type="PROSITE-ProRule" id="PRU00274"/>
    </source>
</evidence>
<evidence type="ECO:0000256" key="5">
    <source>
        <dbReference type="SAM" id="MobiDB-lite"/>
    </source>
</evidence>
<evidence type="ECO:0000269" key="6">
    <source>
    </source>
</evidence>
<evidence type="ECO:0000269" key="7">
    <source>
    </source>
</evidence>
<evidence type="ECO:0000269" key="8">
    <source>
    </source>
</evidence>
<evidence type="ECO:0000269" key="9">
    <source>
    </source>
</evidence>
<evidence type="ECO:0000305" key="10"/>
<evidence type="ECO:0000305" key="11">
    <source>
    </source>
</evidence>
<evidence type="ECO:0000305" key="12">
    <source>
    </source>
</evidence>
<evidence type="ECO:0000312" key="13">
    <source>
        <dbReference type="FlyBase" id="FBgn0002926"/>
    </source>
</evidence>
<evidence type="ECO:0000312" key="14">
    <source>
        <dbReference type="Proteomes" id="UP000000803"/>
    </source>
</evidence>